<accession>Q1CH34</accession>
<accession>C4GUS1</accession>
<evidence type="ECO:0000255" key="1">
    <source>
        <dbReference type="HAMAP-Rule" id="MF_01071"/>
    </source>
</evidence>
<reference key="1">
    <citation type="journal article" date="2006" name="J. Bacteriol.">
        <title>Complete genome sequence of Yersinia pestis strains Antiqua and Nepal516: evidence of gene reduction in an emerging pathogen.</title>
        <authorList>
            <person name="Chain P.S.G."/>
            <person name="Hu P."/>
            <person name="Malfatti S.A."/>
            <person name="Radnedge L."/>
            <person name="Larimer F."/>
            <person name="Vergez L.M."/>
            <person name="Worsham P."/>
            <person name="Chu M.C."/>
            <person name="Andersen G.L."/>
        </authorList>
    </citation>
    <scope>NUCLEOTIDE SEQUENCE [LARGE SCALE GENOMIC DNA]</scope>
    <source>
        <strain>Nepal516</strain>
    </source>
</reference>
<reference key="2">
    <citation type="submission" date="2009-04" db="EMBL/GenBank/DDBJ databases">
        <title>Yersinia pestis Nepal516A whole genome shotgun sequencing project.</title>
        <authorList>
            <person name="Plunkett G. III"/>
            <person name="Anderson B.D."/>
            <person name="Baumler D.J."/>
            <person name="Burland V."/>
            <person name="Cabot E.L."/>
            <person name="Glasner J.D."/>
            <person name="Mau B."/>
            <person name="Neeno-Eckwall E."/>
            <person name="Perna N.T."/>
            <person name="Munk A.C."/>
            <person name="Tapia R."/>
            <person name="Green L.D."/>
            <person name="Rogers Y.C."/>
            <person name="Detter J.C."/>
            <person name="Bruce D.C."/>
            <person name="Brettin T.S."/>
        </authorList>
    </citation>
    <scope>NUCLEOTIDE SEQUENCE [LARGE SCALE GENOMIC DNA]</scope>
    <source>
        <strain>Nepal516</strain>
    </source>
</reference>
<dbReference type="EMBL" id="CP000305">
    <property type="protein sequence ID" value="ABG18696.1"/>
    <property type="molecule type" value="Genomic_DNA"/>
</dbReference>
<dbReference type="EMBL" id="ACNQ01000013">
    <property type="protein sequence ID" value="EEO76458.1"/>
    <property type="molecule type" value="Genomic_DNA"/>
</dbReference>
<dbReference type="RefSeq" id="WP_002211066.1">
    <property type="nucleotide sequence ID" value="NZ_ACNQ01000013.1"/>
</dbReference>
<dbReference type="KEGG" id="ypn:YPN_2368"/>
<dbReference type="HOGENOM" id="CLU_133645_0_0_6"/>
<dbReference type="Proteomes" id="UP000008936">
    <property type="component" value="Chromosome"/>
</dbReference>
<dbReference type="GO" id="GO:0005886">
    <property type="term" value="C:plasma membrane"/>
    <property type="evidence" value="ECO:0007669"/>
    <property type="project" value="UniProtKB-SubCell"/>
</dbReference>
<dbReference type="HAMAP" id="MF_01071">
    <property type="entry name" value="UPF0266"/>
    <property type="match status" value="1"/>
</dbReference>
<dbReference type="InterPro" id="IPR009328">
    <property type="entry name" value="DUF986"/>
</dbReference>
<dbReference type="NCBIfam" id="NF002791">
    <property type="entry name" value="PRK02913.1"/>
    <property type="match status" value="1"/>
</dbReference>
<dbReference type="Pfam" id="PF06173">
    <property type="entry name" value="DUF986"/>
    <property type="match status" value="1"/>
</dbReference>
<dbReference type="PIRSF" id="PIRSF020687">
    <property type="entry name" value="UCP020687"/>
    <property type="match status" value="1"/>
</dbReference>
<proteinExistence type="inferred from homology"/>
<sequence length="153" mass="17809">MSVTDLVLVVFIALLLIYAIYDEFIMNMMKGKTRLQVHLKRKNKLDCMIFVGLIGILIYNNVMAHGAPLTTYLLVGLALVAVYISYIRWPKLLFKNTGFFYANTFIEYSRIKSMNLSEDGILVIDLEQRRLLIQVKKLDDLEKIYNFFIENQS</sequence>
<keyword id="KW-0997">Cell inner membrane</keyword>
<keyword id="KW-1003">Cell membrane</keyword>
<keyword id="KW-0472">Membrane</keyword>
<keyword id="KW-0812">Transmembrane</keyword>
<keyword id="KW-1133">Transmembrane helix</keyword>
<comment type="subcellular location">
    <subcellularLocation>
        <location evidence="1">Cell inner membrane</location>
        <topology evidence="1">Multi-pass membrane protein</topology>
    </subcellularLocation>
</comment>
<comment type="similarity">
    <text evidence="1">Belongs to the UPF0266 family.</text>
</comment>
<feature type="chain" id="PRO_1000064598" description="UPF0266 membrane protein YPN_2368">
    <location>
        <begin position="1"/>
        <end position="153"/>
    </location>
</feature>
<feature type="transmembrane region" description="Helical" evidence="1">
    <location>
        <begin position="6"/>
        <end position="26"/>
    </location>
</feature>
<feature type="transmembrane region" description="Helical" evidence="1">
    <location>
        <begin position="45"/>
        <end position="65"/>
    </location>
</feature>
<feature type="transmembrane region" description="Helical" evidence="1">
    <location>
        <begin position="67"/>
        <end position="87"/>
    </location>
</feature>
<gene>
    <name type="ordered locus">YPN_2368</name>
    <name type="ORF">YP516_2666</name>
</gene>
<protein>
    <recommendedName>
        <fullName evidence="1">UPF0266 membrane protein YPN_2368</fullName>
    </recommendedName>
</protein>
<organism>
    <name type="scientific">Yersinia pestis bv. Antiqua (strain Nepal516)</name>
    <dbReference type="NCBI Taxonomy" id="377628"/>
    <lineage>
        <taxon>Bacteria</taxon>
        <taxon>Pseudomonadati</taxon>
        <taxon>Pseudomonadota</taxon>
        <taxon>Gammaproteobacteria</taxon>
        <taxon>Enterobacterales</taxon>
        <taxon>Yersiniaceae</taxon>
        <taxon>Yersinia</taxon>
    </lineage>
</organism>
<name>Y2368_YERPN</name>